<comment type="function">
    <text evidence="1">Catalyzes the transfer of the gamma-phosphate of ATP to D-galactose to form alpha-D-galactose-1-phosphate (Gal-1-P).</text>
</comment>
<comment type="catalytic activity">
    <reaction evidence="1">
        <text>alpha-D-galactose + ATP = alpha-D-galactose 1-phosphate + ADP + H(+)</text>
        <dbReference type="Rhea" id="RHEA:13553"/>
        <dbReference type="ChEBI" id="CHEBI:15378"/>
        <dbReference type="ChEBI" id="CHEBI:28061"/>
        <dbReference type="ChEBI" id="CHEBI:30616"/>
        <dbReference type="ChEBI" id="CHEBI:58336"/>
        <dbReference type="ChEBI" id="CHEBI:456216"/>
        <dbReference type="EC" id="2.7.1.6"/>
    </reaction>
</comment>
<comment type="pathway">
    <text evidence="1">Carbohydrate metabolism; galactose metabolism.</text>
</comment>
<comment type="subcellular location">
    <subcellularLocation>
        <location evidence="1">Cytoplasm</location>
    </subcellularLocation>
</comment>
<comment type="similarity">
    <text evidence="1">Belongs to the GHMP kinase family. GalK subfamily.</text>
</comment>
<organism>
    <name type="scientific">Salmonella paratyphi A (strain AKU_12601)</name>
    <dbReference type="NCBI Taxonomy" id="554290"/>
    <lineage>
        <taxon>Bacteria</taxon>
        <taxon>Pseudomonadati</taxon>
        <taxon>Pseudomonadota</taxon>
        <taxon>Gammaproteobacteria</taxon>
        <taxon>Enterobacterales</taxon>
        <taxon>Enterobacteriaceae</taxon>
        <taxon>Salmonella</taxon>
    </lineage>
</organism>
<reference key="1">
    <citation type="journal article" date="2009" name="BMC Genomics">
        <title>Pseudogene accumulation in the evolutionary histories of Salmonella enterica serovars Paratyphi A and Typhi.</title>
        <authorList>
            <person name="Holt K.E."/>
            <person name="Thomson N.R."/>
            <person name="Wain J."/>
            <person name="Langridge G.C."/>
            <person name="Hasan R."/>
            <person name="Bhutta Z.A."/>
            <person name="Quail M.A."/>
            <person name="Norbertczak H."/>
            <person name="Walker D."/>
            <person name="Simmonds M."/>
            <person name="White B."/>
            <person name="Bason N."/>
            <person name="Mungall K."/>
            <person name="Dougan G."/>
            <person name="Parkhill J."/>
        </authorList>
    </citation>
    <scope>NUCLEOTIDE SEQUENCE [LARGE SCALE GENOMIC DNA]</scope>
    <source>
        <strain>AKU_12601</strain>
    </source>
</reference>
<dbReference type="EC" id="2.7.1.6" evidence="1"/>
<dbReference type="EMBL" id="FM200053">
    <property type="protein sequence ID" value="CAR60042.1"/>
    <property type="molecule type" value="Genomic_DNA"/>
</dbReference>
<dbReference type="RefSeq" id="WP_001049355.1">
    <property type="nucleotide sequence ID" value="NC_011147.1"/>
</dbReference>
<dbReference type="SMR" id="B5BC50"/>
<dbReference type="KEGG" id="sek:SSPA1845"/>
<dbReference type="HOGENOM" id="CLU_017814_2_1_6"/>
<dbReference type="UniPathway" id="UPA00214"/>
<dbReference type="Proteomes" id="UP000001869">
    <property type="component" value="Chromosome"/>
</dbReference>
<dbReference type="GO" id="GO:0005829">
    <property type="term" value="C:cytosol"/>
    <property type="evidence" value="ECO:0007669"/>
    <property type="project" value="TreeGrafter"/>
</dbReference>
<dbReference type="GO" id="GO:0005524">
    <property type="term" value="F:ATP binding"/>
    <property type="evidence" value="ECO:0007669"/>
    <property type="project" value="UniProtKB-UniRule"/>
</dbReference>
<dbReference type="GO" id="GO:0004335">
    <property type="term" value="F:galactokinase activity"/>
    <property type="evidence" value="ECO:0007669"/>
    <property type="project" value="UniProtKB-UniRule"/>
</dbReference>
<dbReference type="GO" id="GO:0000287">
    <property type="term" value="F:magnesium ion binding"/>
    <property type="evidence" value="ECO:0007669"/>
    <property type="project" value="UniProtKB-UniRule"/>
</dbReference>
<dbReference type="GO" id="GO:0006012">
    <property type="term" value="P:galactose metabolic process"/>
    <property type="evidence" value="ECO:0007669"/>
    <property type="project" value="UniProtKB-UniRule"/>
</dbReference>
<dbReference type="FunFam" id="3.30.230.10:FF:000017">
    <property type="entry name" value="Galactokinase"/>
    <property type="match status" value="1"/>
</dbReference>
<dbReference type="FunFam" id="3.30.70.890:FF:000001">
    <property type="entry name" value="Galactokinase"/>
    <property type="match status" value="1"/>
</dbReference>
<dbReference type="Gene3D" id="3.30.230.10">
    <property type="match status" value="1"/>
</dbReference>
<dbReference type="Gene3D" id="3.30.70.890">
    <property type="entry name" value="GHMP kinase, C-terminal domain"/>
    <property type="match status" value="1"/>
</dbReference>
<dbReference type="HAMAP" id="MF_00246">
    <property type="entry name" value="Galactokinase"/>
    <property type="match status" value="1"/>
</dbReference>
<dbReference type="InterPro" id="IPR000705">
    <property type="entry name" value="Galactokinase"/>
</dbReference>
<dbReference type="InterPro" id="IPR022963">
    <property type="entry name" value="Galactokinase_bac"/>
</dbReference>
<dbReference type="InterPro" id="IPR019741">
    <property type="entry name" value="Galactokinase_CS"/>
</dbReference>
<dbReference type="InterPro" id="IPR019539">
    <property type="entry name" value="GalKase_N"/>
</dbReference>
<dbReference type="InterPro" id="IPR013750">
    <property type="entry name" value="GHMP_kinase_C_dom"/>
</dbReference>
<dbReference type="InterPro" id="IPR036554">
    <property type="entry name" value="GHMP_kinase_C_sf"/>
</dbReference>
<dbReference type="InterPro" id="IPR006204">
    <property type="entry name" value="GHMP_kinase_N_dom"/>
</dbReference>
<dbReference type="InterPro" id="IPR006203">
    <property type="entry name" value="GHMP_knse_ATP-bd_CS"/>
</dbReference>
<dbReference type="InterPro" id="IPR006206">
    <property type="entry name" value="Mevalonate/galactokinase"/>
</dbReference>
<dbReference type="InterPro" id="IPR020568">
    <property type="entry name" value="Ribosomal_Su5_D2-typ_SF"/>
</dbReference>
<dbReference type="InterPro" id="IPR014721">
    <property type="entry name" value="Ribsml_uS5_D2-typ_fold_subgr"/>
</dbReference>
<dbReference type="NCBIfam" id="TIGR00131">
    <property type="entry name" value="gal_kin"/>
    <property type="match status" value="1"/>
</dbReference>
<dbReference type="NCBIfam" id="NF003472">
    <property type="entry name" value="PRK05101.1"/>
    <property type="match status" value="1"/>
</dbReference>
<dbReference type="PANTHER" id="PTHR10457:SF7">
    <property type="entry name" value="GALACTOKINASE-RELATED"/>
    <property type="match status" value="1"/>
</dbReference>
<dbReference type="PANTHER" id="PTHR10457">
    <property type="entry name" value="MEVALONATE KINASE/GALACTOKINASE"/>
    <property type="match status" value="1"/>
</dbReference>
<dbReference type="Pfam" id="PF10509">
    <property type="entry name" value="GalKase_gal_bdg"/>
    <property type="match status" value="1"/>
</dbReference>
<dbReference type="Pfam" id="PF08544">
    <property type="entry name" value="GHMP_kinases_C"/>
    <property type="match status" value="1"/>
</dbReference>
<dbReference type="Pfam" id="PF00288">
    <property type="entry name" value="GHMP_kinases_N"/>
    <property type="match status" value="1"/>
</dbReference>
<dbReference type="PIRSF" id="PIRSF000530">
    <property type="entry name" value="Galactokinase"/>
    <property type="match status" value="1"/>
</dbReference>
<dbReference type="PRINTS" id="PR00473">
    <property type="entry name" value="GALCTOKINASE"/>
</dbReference>
<dbReference type="PRINTS" id="PR00959">
    <property type="entry name" value="MEVGALKINASE"/>
</dbReference>
<dbReference type="SUPFAM" id="SSF55060">
    <property type="entry name" value="GHMP Kinase, C-terminal domain"/>
    <property type="match status" value="1"/>
</dbReference>
<dbReference type="SUPFAM" id="SSF54211">
    <property type="entry name" value="Ribosomal protein S5 domain 2-like"/>
    <property type="match status" value="1"/>
</dbReference>
<dbReference type="PROSITE" id="PS00106">
    <property type="entry name" value="GALACTOKINASE"/>
    <property type="match status" value="1"/>
</dbReference>
<dbReference type="PROSITE" id="PS00627">
    <property type="entry name" value="GHMP_KINASES_ATP"/>
    <property type="match status" value="1"/>
</dbReference>
<evidence type="ECO:0000255" key="1">
    <source>
        <dbReference type="HAMAP-Rule" id="MF_00246"/>
    </source>
</evidence>
<keyword id="KW-0067">ATP-binding</keyword>
<keyword id="KW-0119">Carbohydrate metabolism</keyword>
<keyword id="KW-0963">Cytoplasm</keyword>
<keyword id="KW-0299">Galactose metabolism</keyword>
<keyword id="KW-0418">Kinase</keyword>
<keyword id="KW-0460">Magnesium</keyword>
<keyword id="KW-0479">Metal-binding</keyword>
<keyword id="KW-0547">Nucleotide-binding</keyword>
<keyword id="KW-0808">Transferase</keyword>
<feature type="chain" id="PRO_1000100844" description="Galactokinase">
    <location>
        <begin position="1"/>
        <end position="382"/>
    </location>
</feature>
<feature type="active site" description="Proton acceptor" evidence="1">
    <location>
        <position position="174"/>
    </location>
</feature>
<feature type="binding site" evidence="1">
    <location>
        <begin position="34"/>
        <end position="37"/>
    </location>
    <ligand>
        <name>substrate</name>
    </ligand>
</feature>
<feature type="binding site" evidence="1">
    <location>
        <begin position="124"/>
        <end position="130"/>
    </location>
    <ligand>
        <name>ATP</name>
        <dbReference type="ChEBI" id="CHEBI:30616"/>
    </ligand>
</feature>
<feature type="binding site" evidence="1">
    <location>
        <position position="130"/>
    </location>
    <ligand>
        <name>Mg(2+)</name>
        <dbReference type="ChEBI" id="CHEBI:18420"/>
    </ligand>
</feature>
<feature type="binding site" evidence="1">
    <location>
        <position position="162"/>
    </location>
    <ligand>
        <name>Mg(2+)</name>
        <dbReference type="ChEBI" id="CHEBI:18420"/>
    </ligand>
</feature>
<feature type="binding site" evidence="1">
    <location>
        <position position="223"/>
    </location>
    <ligand>
        <name>substrate</name>
    </ligand>
</feature>
<feature type="site" description="Transition state stabilizer" evidence="1">
    <location>
        <position position="28"/>
    </location>
</feature>
<sequence>MNLKEKTRALFAEIFGYPATHTIQAPGRVNLIGEHTDYNDGFVLPCAIDYQTVISCAPRDDRTVRVIAADYDNQADEFSLDAPIVTHDSQQWSNYVRGVVKHLQQRNNAFGGVDMVISGNVPQGAGLSSSASLEVAVGTVFQQLYHLPLDGAQIALNGQEAENQFVGCNCGIMDQLISALGKKDHALLIDCRTLGAKAVSMPKGVAVVIINSNFKRTLVGSEYNTRREQCETGARFFQQPALRDVSLEAFNAVASELDPVVAKRVRHVLSENARTVEAASALEKGDLQRMGQLMAESHASMRDDFEITVPQIDTLVDIVKATIGDQGGVRMTGGGFGGCVVALIPEDLVPAVQQAVAQQYEAKTGIKETFYVCKSSQGAGQC</sequence>
<proteinExistence type="inferred from homology"/>
<protein>
    <recommendedName>
        <fullName evidence="1">Galactokinase</fullName>
        <ecNumber evidence="1">2.7.1.6</ecNumber>
    </recommendedName>
    <alternativeName>
        <fullName evidence="1">Galactose kinase</fullName>
    </alternativeName>
</protein>
<name>GAL1_SALPK</name>
<accession>B5BC50</accession>
<gene>
    <name evidence="1" type="primary">galK</name>
    <name type="ordered locus">SSPA1845</name>
</gene>